<accession>Q4UEA0</accession>
<organism>
    <name type="scientific">Theileria annulata</name>
    <dbReference type="NCBI Taxonomy" id="5874"/>
    <lineage>
        <taxon>Eukaryota</taxon>
        <taxon>Sar</taxon>
        <taxon>Alveolata</taxon>
        <taxon>Apicomplexa</taxon>
        <taxon>Aconoidasida</taxon>
        <taxon>Piroplasmida</taxon>
        <taxon>Theileriidae</taxon>
        <taxon>Theileria</taxon>
    </lineage>
</organism>
<gene>
    <name type="ORF">TA12950</name>
</gene>
<proteinExistence type="inferred from homology"/>
<protein>
    <recommendedName>
        <fullName>Cytochrome c</fullName>
    </recommendedName>
</protein>
<name>CYC_THEAN</name>
<evidence type="ECO:0000250" key="1"/>
<evidence type="ECO:0000255" key="2">
    <source>
        <dbReference type="PROSITE-ProRule" id="PRU00433"/>
    </source>
</evidence>
<evidence type="ECO:0000305" key="3"/>
<sequence>MAKPEPDVVVPEGDPAKGAKLFKSKCAQCHTINKGGSVKQGPNLFGFYGRKSGSTDYAYSDANKNSGIVWSDKHLFVYLVNPKQYIPGTKMVFAGLKKEQDRADLIAYLKEASSK</sequence>
<comment type="function">
    <text evidence="1">Electron carrier protein. The oxidized form of the cytochrome c heme group can accept an electron from the heme group of the cytochrome c1 subunit of cytochrome reductase. Cytochrome c then transfers this electron to the cytochrome oxidase complex, the final protein carrier in the mitochondrial electron-transport chain (By similarity).</text>
</comment>
<comment type="subcellular location">
    <subcellularLocation>
        <location evidence="1">Mitochondrion intermembrane space</location>
    </subcellularLocation>
    <text evidence="1">Loosely associated with the inner membrane.</text>
</comment>
<comment type="PTM">
    <text evidence="1">Binds 1 heme c group covalently per subunit.</text>
</comment>
<comment type="similarity">
    <text evidence="3">Belongs to the cytochrome c family.</text>
</comment>
<comment type="online information" name="Protein Spotlight">
    <link uri="https://www.proteinspotlight.org/back_issues/076"/>
    <text>Life shuttle - Issue 76 of November 2006</text>
</comment>
<keyword id="KW-0249">Electron transport</keyword>
<keyword id="KW-0349">Heme</keyword>
<keyword id="KW-0408">Iron</keyword>
<keyword id="KW-0479">Metal-binding</keyword>
<keyword id="KW-0496">Mitochondrion</keyword>
<keyword id="KW-1185">Reference proteome</keyword>
<keyword id="KW-0679">Respiratory chain</keyword>
<keyword id="KW-0813">Transport</keyword>
<reference key="1">
    <citation type="journal article" date="2005" name="Science">
        <title>Genome of the host-cell transforming parasite Theileria annulata compared with T. parva.</title>
        <authorList>
            <person name="Pain A."/>
            <person name="Renauld H."/>
            <person name="Berriman M."/>
            <person name="Murphy L."/>
            <person name="Yeats C.A."/>
            <person name="Weir W."/>
            <person name="Kerhornou A."/>
            <person name="Aslett M."/>
            <person name="Bishop R."/>
            <person name="Bouchier C."/>
            <person name="Cochet M."/>
            <person name="Coulson R.M.R."/>
            <person name="Cronin A."/>
            <person name="de Villiers E.P."/>
            <person name="Fraser A."/>
            <person name="Fosker N."/>
            <person name="Gardner M."/>
            <person name="Goble A."/>
            <person name="Griffiths-Jones S."/>
            <person name="Harris D.E."/>
            <person name="Katzer F."/>
            <person name="Larke N."/>
            <person name="Lord A."/>
            <person name="Maser P."/>
            <person name="McKellar S."/>
            <person name="Mooney P."/>
            <person name="Morton F."/>
            <person name="Nene V."/>
            <person name="O'Neil S."/>
            <person name="Price C."/>
            <person name="Quail M.A."/>
            <person name="Rabbinowitsch E."/>
            <person name="Rawlings N.D."/>
            <person name="Rutter S."/>
            <person name="Saunders D."/>
            <person name="Seeger K."/>
            <person name="Shah T."/>
            <person name="Squares R."/>
            <person name="Squares S."/>
            <person name="Tivey A."/>
            <person name="Walker A.R."/>
            <person name="Woodward J."/>
            <person name="Dobbelaere D.A.E."/>
            <person name="Langsley G."/>
            <person name="Rajandream M.A."/>
            <person name="McKeever D."/>
            <person name="Shiels B."/>
            <person name="Tait A."/>
            <person name="Barrell B.G."/>
            <person name="Hall N."/>
        </authorList>
    </citation>
    <scope>NUCLEOTIDE SEQUENCE [LARGE SCALE GENOMIC DNA]</scope>
    <source>
        <strain>Ankara</strain>
    </source>
</reference>
<feature type="chain" id="PRO_0000273192" description="Cytochrome c">
    <location>
        <begin position="1"/>
        <end position="115"/>
    </location>
</feature>
<feature type="binding site" description="covalent" evidence="2">
    <location>
        <position position="26"/>
    </location>
    <ligand>
        <name>heme c</name>
        <dbReference type="ChEBI" id="CHEBI:61717"/>
    </ligand>
</feature>
<feature type="binding site" description="covalent" evidence="2">
    <location>
        <position position="29"/>
    </location>
    <ligand>
        <name>heme c</name>
        <dbReference type="ChEBI" id="CHEBI:61717"/>
    </ligand>
</feature>
<feature type="binding site" description="axial binding residue" evidence="2">
    <location>
        <position position="30"/>
    </location>
    <ligand>
        <name>heme c</name>
        <dbReference type="ChEBI" id="CHEBI:61717"/>
    </ligand>
    <ligandPart>
        <name>Fe</name>
        <dbReference type="ChEBI" id="CHEBI:18248"/>
    </ligandPart>
</feature>
<feature type="binding site" description="axial binding residue" evidence="2">
    <location>
        <position position="91"/>
    </location>
    <ligand>
        <name>heme c</name>
        <dbReference type="ChEBI" id="CHEBI:61717"/>
    </ligand>
    <ligandPart>
        <name>Fe</name>
        <dbReference type="ChEBI" id="CHEBI:18248"/>
    </ligandPart>
</feature>
<dbReference type="EMBL" id="CR940348">
    <property type="protein sequence ID" value="CAI74589.1"/>
    <property type="molecule type" value="Genomic_DNA"/>
</dbReference>
<dbReference type="RefSeq" id="XP_952321.1">
    <property type="nucleotide sequence ID" value="XM_947228.1"/>
</dbReference>
<dbReference type="SMR" id="Q4UEA0"/>
<dbReference type="FunCoup" id="Q4UEA0">
    <property type="interactions" value="157"/>
</dbReference>
<dbReference type="STRING" id="5874.Q4UEA0"/>
<dbReference type="GeneID" id="3862479"/>
<dbReference type="KEGG" id="tan:TA12950"/>
<dbReference type="VEuPathDB" id="PiroplasmaDB:TA12950"/>
<dbReference type="eggNOG" id="KOG3453">
    <property type="taxonomic scope" value="Eukaryota"/>
</dbReference>
<dbReference type="InParanoid" id="Q4UEA0"/>
<dbReference type="OMA" id="KARCAQC"/>
<dbReference type="OrthoDB" id="449280at2759"/>
<dbReference type="Proteomes" id="UP000001950">
    <property type="component" value="Chromosome 2"/>
</dbReference>
<dbReference type="GO" id="GO:0005758">
    <property type="term" value="C:mitochondrial intermembrane space"/>
    <property type="evidence" value="ECO:0007669"/>
    <property type="project" value="UniProtKB-SubCell"/>
</dbReference>
<dbReference type="GO" id="GO:0009055">
    <property type="term" value="F:electron transfer activity"/>
    <property type="evidence" value="ECO:0007669"/>
    <property type="project" value="InterPro"/>
</dbReference>
<dbReference type="GO" id="GO:0020037">
    <property type="term" value="F:heme binding"/>
    <property type="evidence" value="ECO:0007669"/>
    <property type="project" value="InterPro"/>
</dbReference>
<dbReference type="GO" id="GO:0046872">
    <property type="term" value="F:metal ion binding"/>
    <property type="evidence" value="ECO:0007669"/>
    <property type="project" value="UniProtKB-KW"/>
</dbReference>
<dbReference type="FunFam" id="1.10.760.10:FF:000001">
    <property type="entry name" value="Cytochrome c iso-1"/>
    <property type="match status" value="1"/>
</dbReference>
<dbReference type="Gene3D" id="1.10.760.10">
    <property type="entry name" value="Cytochrome c-like domain"/>
    <property type="match status" value="1"/>
</dbReference>
<dbReference type="InterPro" id="IPR009056">
    <property type="entry name" value="Cyt_c-like_dom"/>
</dbReference>
<dbReference type="InterPro" id="IPR036909">
    <property type="entry name" value="Cyt_c-like_dom_sf"/>
</dbReference>
<dbReference type="InterPro" id="IPR002327">
    <property type="entry name" value="Cyt_c_1A/1B"/>
</dbReference>
<dbReference type="PANTHER" id="PTHR11961">
    <property type="entry name" value="CYTOCHROME C"/>
    <property type="match status" value="1"/>
</dbReference>
<dbReference type="Pfam" id="PF00034">
    <property type="entry name" value="Cytochrom_C"/>
    <property type="match status" value="1"/>
</dbReference>
<dbReference type="PRINTS" id="PR00604">
    <property type="entry name" value="CYTCHRMECIAB"/>
</dbReference>
<dbReference type="SUPFAM" id="SSF46626">
    <property type="entry name" value="Cytochrome c"/>
    <property type="match status" value="1"/>
</dbReference>
<dbReference type="PROSITE" id="PS51007">
    <property type="entry name" value="CYTC"/>
    <property type="match status" value="1"/>
</dbReference>